<evidence type="ECO:0000255" key="1">
    <source>
        <dbReference type="HAMAP-Rule" id="MF_00281"/>
    </source>
</evidence>
<reference key="1">
    <citation type="journal article" date="2001" name="Genome Res.">
        <title>The complete genome sequence of the lactic acid bacterium Lactococcus lactis ssp. lactis IL1403.</title>
        <authorList>
            <person name="Bolotin A."/>
            <person name="Wincker P."/>
            <person name="Mauger S."/>
            <person name="Jaillon O."/>
            <person name="Malarme K."/>
            <person name="Weissenbach J."/>
            <person name="Ehrlich S.D."/>
            <person name="Sorokin A."/>
        </authorList>
    </citation>
    <scope>NUCLEOTIDE SEQUENCE [LARGE SCALE GENOMIC DNA]</scope>
    <source>
        <strain>IL1403</strain>
    </source>
</reference>
<accession>Q9CEB4</accession>
<dbReference type="EC" id="6.1.1.20" evidence="1"/>
<dbReference type="EMBL" id="AE005176">
    <property type="protein sequence ID" value="AAK06027.1"/>
    <property type="molecule type" value="Genomic_DNA"/>
</dbReference>
<dbReference type="PIR" id="A86866">
    <property type="entry name" value="A86866"/>
</dbReference>
<dbReference type="RefSeq" id="NP_268086.1">
    <property type="nucleotide sequence ID" value="NC_002662.1"/>
</dbReference>
<dbReference type="RefSeq" id="WP_004254858.1">
    <property type="nucleotide sequence ID" value="NC_002662.1"/>
</dbReference>
<dbReference type="SMR" id="Q9CEB4"/>
<dbReference type="PaxDb" id="272623-L0354"/>
<dbReference type="EnsemblBacteria" id="AAK06027">
    <property type="protein sequence ID" value="AAK06027"/>
    <property type="gene ID" value="L0354"/>
</dbReference>
<dbReference type="GeneID" id="89634299"/>
<dbReference type="KEGG" id="lla:L0354"/>
<dbReference type="PATRIC" id="fig|272623.7.peg.2073"/>
<dbReference type="eggNOG" id="COG0016">
    <property type="taxonomic scope" value="Bacteria"/>
</dbReference>
<dbReference type="HOGENOM" id="CLU_025086_0_1_9"/>
<dbReference type="OrthoDB" id="9800719at2"/>
<dbReference type="Proteomes" id="UP000002196">
    <property type="component" value="Chromosome"/>
</dbReference>
<dbReference type="GO" id="GO:0005737">
    <property type="term" value="C:cytoplasm"/>
    <property type="evidence" value="ECO:0007669"/>
    <property type="project" value="UniProtKB-SubCell"/>
</dbReference>
<dbReference type="GO" id="GO:0005524">
    <property type="term" value="F:ATP binding"/>
    <property type="evidence" value="ECO:0007669"/>
    <property type="project" value="UniProtKB-UniRule"/>
</dbReference>
<dbReference type="GO" id="GO:0140096">
    <property type="term" value="F:catalytic activity, acting on a protein"/>
    <property type="evidence" value="ECO:0007669"/>
    <property type="project" value="UniProtKB-ARBA"/>
</dbReference>
<dbReference type="GO" id="GO:0000287">
    <property type="term" value="F:magnesium ion binding"/>
    <property type="evidence" value="ECO:0007669"/>
    <property type="project" value="UniProtKB-UniRule"/>
</dbReference>
<dbReference type="GO" id="GO:0004826">
    <property type="term" value="F:phenylalanine-tRNA ligase activity"/>
    <property type="evidence" value="ECO:0007669"/>
    <property type="project" value="UniProtKB-UniRule"/>
</dbReference>
<dbReference type="GO" id="GO:0016740">
    <property type="term" value="F:transferase activity"/>
    <property type="evidence" value="ECO:0007669"/>
    <property type="project" value="UniProtKB-ARBA"/>
</dbReference>
<dbReference type="GO" id="GO:0000049">
    <property type="term" value="F:tRNA binding"/>
    <property type="evidence" value="ECO:0007669"/>
    <property type="project" value="InterPro"/>
</dbReference>
<dbReference type="GO" id="GO:0006432">
    <property type="term" value="P:phenylalanyl-tRNA aminoacylation"/>
    <property type="evidence" value="ECO:0007669"/>
    <property type="project" value="UniProtKB-UniRule"/>
</dbReference>
<dbReference type="CDD" id="cd00496">
    <property type="entry name" value="PheRS_alpha_core"/>
    <property type="match status" value="1"/>
</dbReference>
<dbReference type="FunFam" id="3.30.930.10:FF:000003">
    <property type="entry name" value="Phenylalanine--tRNA ligase alpha subunit"/>
    <property type="match status" value="1"/>
</dbReference>
<dbReference type="Gene3D" id="3.30.930.10">
    <property type="entry name" value="Bira Bifunctional Protein, Domain 2"/>
    <property type="match status" value="1"/>
</dbReference>
<dbReference type="HAMAP" id="MF_00281">
    <property type="entry name" value="Phe_tRNA_synth_alpha1"/>
    <property type="match status" value="1"/>
</dbReference>
<dbReference type="InterPro" id="IPR006195">
    <property type="entry name" value="aa-tRNA-synth_II"/>
</dbReference>
<dbReference type="InterPro" id="IPR045864">
    <property type="entry name" value="aa-tRNA-synth_II/BPL/LPL"/>
</dbReference>
<dbReference type="InterPro" id="IPR004529">
    <property type="entry name" value="Phe-tRNA-synth_IIc_asu"/>
</dbReference>
<dbReference type="InterPro" id="IPR004188">
    <property type="entry name" value="Phe-tRNA_ligase_II_N"/>
</dbReference>
<dbReference type="InterPro" id="IPR022911">
    <property type="entry name" value="Phe_tRNA_ligase_alpha1_bac"/>
</dbReference>
<dbReference type="InterPro" id="IPR002319">
    <property type="entry name" value="Phenylalanyl-tRNA_Synthase"/>
</dbReference>
<dbReference type="InterPro" id="IPR010978">
    <property type="entry name" value="tRNA-bd_arm"/>
</dbReference>
<dbReference type="NCBIfam" id="TIGR00468">
    <property type="entry name" value="pheS"/>
    <property type="match status" value="1"/>
</dbReference>
<dbReference type="PANTHER" id="PTHR11538:SF41">
    <property type="entry name" value="PHENYLALANINE--TRNA LIGASE, MITOCHONDRIAL"/>
    <property type="match status" value="1"/>
</dbReference>
<dbReference type="PANTHER" id="PTHR11538">
    <property type="entry name" value="PHENYLALANYL-TRNA SYNTHETASE"/>
    <property type="match status" value="1"/>
</dbReference>
<dbReference type="Pfam" id="PF02912">
    <property type="entry name" value="Phe_tRNA-synt_N"/>
    <property type="match status" value="1"/>
</dbReference>
<dbReference type="Pfam" id="PF01409">
    <property type="entry name" value="tRNA-synt_2d"/>
    <property type="match status" value="1"/>
</dbReference>
<dbReference type="SUPFAM" id="SSF55681">
    <property type="entry name" value="Class II aaRS and biotin synthetases"/>
    <property type="match status" value="1"/>
</dbReference>
<dbReference type="SUPFAM" id="SSF46589">
    <property type="entry name" value="tRNA-binding arm"/>
    <property type="match status" value="1"/>
</dbReference>
<dbReference type="PROSITE" id="PS50862">
    <property type="entry name" value="AA_TRNA_LIGASE_II"/>
    <property type="match status" value="1"/>
</dbReference>
<name>SYFA_LACLA</name>
<feature type="chain" id="PRO_0000126718" description="Phenylalanine--tRNA ligase alpha subunit">
    <location>
        <begin position="1"/>
        <end position="346"/>
    </location>
</feature>
<feature type="binding site" evidence="1">
    <location>
        <position position="259"/>
    </location>
    <ligand>
        <name>Mg(2+)</name>
        <dbReference type="ChEBI" id="CHEBI:18420"/>
        <note>shared with beta subunit</note>
    </ligand>
</feature>
<gene>
    <name evidence="1" type="primary">pheS</name>
    <name type="ordered locus">LL1929</name>
    <name type="ORF">L0354</name>
</gene>
<organism>
    <name type="scientific">Lactococcus lactis subsp. lactis (strain IL1403)</name>
    <name type="common">Streptococcus lactis</name>
    <dbReference type="NCBI Taxonomy" id="272623"/>
    <lineage>
        <taxon>Bacteria</taxon>
        <taxon>Bacillati</taxon>
        <taxon>Bacillota</taxon>
        <taxon>Bacilli</taxon>
        <taxon>Lactobacillales</taxon>
        <taxon>Streptococcaceae</taxon>
        <taxon>Lactococcus</taxon>
    </lineage>
</organism>
<protein>
    <recommendedName>
        <fullName evidence="1">Phenylalanine--tRNA ligase alpha subunit</fullName>
        <ecNumber evidence="1">6.1.1.20</ecNumber>
    </recommendedName>
    <alternativeName>
        <fullName evidence="1">Phenylalanyl-tRNA synthetase alpha subunit</fullName>
        <shortName evidence="1">PheRS</shortName>
    </alternativeName>
</protein>
<comment type="catalytic activity">
    <reaction evidence="1">
        <text>tRNA(Phe) + L-phenylalanine + ATP = L-phenylalanyl-tRNA(Phe) + AMP + diphosphate + H(+)</text>
        <dbReference type="Rhea" id="RHEA:19413"/>
        <dbReference type="Rhea" id="RHEA-COMP:9668"/>
        <dbReference type="Rhea" id="RHEA-COMP:9699"/>
        <dbReference type="ChEBI" id="CHEBI:15378"/>
        <dbReference type="ChEBI" id="CHEBI:30616"/>
        <dbReference type="ChEBI" id="CHEBI:33019"/>
        <dbReference type="ChEBI" id="CHEBI:58095"/>
        <dbReference type="ChEBI" id="CHEBI:78442"/>
        <dbReference type="ChEBI" id="CHEBI:78531"/>
        <dbReference type="ChEBI" id="CHEBI:456215"/>
        <dbReference type="EC" id="6.1.1.20"/>
    </reaction>
</comment>
<comment type="cofactor">
    <cofactor evidence="1">
        <name>Mg(2+)</name>
        <dbReference type="ChEBI" id="CHEBI:18420"/>
    </cofactor>
    <text evidence="1">Binds 2 magnesium ions per tetramer.</text>
</comment>
<comment type="subunit">
    <text evidence="1">Tetramer of two alpha and two beta subunits.</text>
</comment>
<comment type="subcellular location">
    <subcellularLocation>
        <location evidence="1">Cytoplasm</location>
    </subcellularLocation>
</comment>
<comment type="similarity">
    <text evidence="1">Belongs to the class-II aminoacyl-tRNA synthetase family. Phe-tRNA synthetase alpha subunit type 1 subfamily.</text>
</comment>
<proteinExistence type="inferred from homology"/>
<keyword id="KW-0030">Aminoacyl-tRNA synthetase</keyword>
<keyword id="KW-0067">ATP-binding</keyword>
<keyword id="KW-0963">Cytoplasm</keyword>
<keyword id="KW-0436">Ligase</keyword>
<keyword id="KW-0460">Magnesium</keyword>
<keyword id="KW-0479">Metal-binding</keyword>
<keyword id="KW-0547">Nucleotide-binding</keyword>
<keyword id="KW-0648">Protein biosynthesis</keyword>
<keyword id="KW-1185">Reference proteome</keyword>
<sequence length="346" mass="39273">MNLQEKIEDLRKRTLSDLLSVADEKTLNNLRTVMLGKKGELTEILKGMKDLTNEERPVIGALANAFRDEFGAKFEAKKVEIEQAVMNAALESETLDVTLPGKAQKKGSRHILTQTQEEIEEIFLGMGYEIVDGYEVETDHYNFERMNLPKDHPARDMQDTFYITNEVLLRTHTSPMQARTMDAHDFSKGGLRMIAPGRVYRRDTDDATHSHQFHQIEGLVVDKNITMADLKGTLDLVMKKMFGQDRELRWRPSYFPFTEPSVEVDISCFKCGGKGCNVCKHTGWIEILGAGMVHPNVLEMSGLDSSVYSGFAFGLGQERIAMLRYGINDIRGFYQGDVRFLEQFGK</sequence>